<organism>
    <name type="scientific">Shewanella sp. (strain MR-4)</name>
    <dbReference type="NCBI Taxonomy" id="60480"/>
    <lineage>
        <taxon>Bacteria</taxon>
        <taxon>Pseudomonadati</taxon>
        <taxon>Pseudomonadota</taxon>
        <taxon>Gammaproteobacteria</taxon>
        <taxon>Alteromonadales</taxon>
        <taxon>Shewanellaceae</taxon>
        <taxon>Shewanella</taxon>
    </lineage>
</organism>
<proteinExistence type="inferred from homology"/>
<feature type="chain" id="PRO_1000066527" description="FMN-dependent NADH:quinone oxidoreductase">
    <location>
        <begin position="1"/>
        <end position="198"/>
    </location>
</feature>
<feature type="binding site" evidence="1">
    <location>
        <position position="10"/>
    </location>
    <ligand>
        <name>FMN</name>
        <dbReference type="ChEBI" id="CHEBI:58210"/>
    </ligand>
</feature>
<feature type="binding site" evidence="1">
    <location>
        <begin position="16"/>
        <end position="18"/>
    </location>
    <ligand>
        <name>FMN</name>
        <dbReference type="ChEBI" id="CHEBI:58210"/>
    </ligand>
</feature>
<feature type="binding site" evidence="1">
    <location>
        <begin position="94"/>
        <end position="97"/>
    </location>
    <ligand>
        <name>FMN</name>
        <dbReference type="ChEBI" id="CHEBI:58210"/>
    </ligand>
</feature>
<feature type="binding site" evidence="1">
    <location>
        <begin position="138"/>
        <end position="141"/>
    </location>
    <ligand>
        <name>FMN</name>
        <dbReference type="ChEBI" id="CHEBI:58210"/>
    </ligand>
</feature>
<dbReference type="EC" id="1.6.5.-" evidence="1"/>
<dbReference type="EC" id="1.7.1.17" evidence="1"/>
<dbReference type="EMBL" id="CP000446">
    <property type="protein sequence ID" value="ABI37401.1"/>
    <property type="molecule type" value="Genomic_DNA"/>
</dbReference>
<dbReference type="RefSeq" id="WP_011621127.1">
    <property type="nucleotide sequence ID" value="NC_008321.1"/>
</dbReference>
<dbReference type="SMR" id="Q0HNG6"/>
<dbReference type="KEGG" id="she:Shewmr4_0321"/>
<dbReference type="HOGENOM" id="CLU_088964_0_0_6"/>
<dbReference type="GO" id="GO:0009055">
    <property type="term" value="F:electron transfer activity"/>
    <property type="evidence" value="ECO:0007669"/>
    <property type="project" value="UniProtKB-UniRule"/>
</dbReference>
<dbReference type="GO" id="GO:0010181">
    <property type="term" value="F:FMN binding"/>
    <property type="evidence" value="ECO:0007669"/>
    <property type="project" value="UniProtKB-UniRule"/>
</dbReference>
<dbReference type="GO" id="GO:0016652">
    <property type="term" value="F:oxidoreductase activity, acting on NAD(P)H as acceptor"/>
    <property type="evidence" value="ECO:0007669"/>
    <property type="project" value="UniProtKB-UniRule"/>
</dbReference>
<dbReference type="GO" id="GO:0016655">
    <property type="term" value="F:oxidoreductase activity, acting on NAD(P)H, quinone or similar compound as acceptor"/>
    <property type="evidence" value="ECO:0007669"/>
    <property type="project" value="InterPro"/>
</dbReference>
<dbReference type="Gene3D" id="3.40.50.360">
    <property type="match status" value="1"/>
</dbReference>
<dbReference type="HAMAP" id="MF_01216">
    <property type="entry name" value="Azoreductase_type1"/>
    <property type="match status" value="1"/>
</dbReference>
<dbReference type="InterPro" id="IPR003680">
    <property type="entry name" value="Flavodoxin_fold"/>
</dbReference>
<dbReference type="InterPro" id="IPR029039">
    <property type="entry name" value="Flavoprotein-like_sf"/>
</dbReference>
<dbReference type="InterPro" id="IPR050104">
    <property type="entry name" value="FMN-dep_NADH:Q_OxRdtase_AzoR1"/>
</dbReference>
<dbReference type="InterPro" id="IPR023048">
    <property type="entry name" value="NADH:quinone_OxRdtase_FMN_depd"/>
</dbReference>
<dbReference type="PANTHER" id="PTHR43741">
    <property type="entry name" value="FMN-DEPENDENT NADH-AZOREDUCTASE 1"/>
    <property type="match status" value="1"/>
</dbReference>
<dbReference type="PANTHER" id="PTHR43741:SF2">
    <property type="entry name" value="FMN-DEPENDENT NADH:QUINONE OXIDOREDUCTASE"/>
    <property type="match status" value="1"/>
</dbReference>
<dbReference type="Pfam" id="PF02525">
    <property type="entry name" value="Flavodoxin_2"/>
    <property type="match status" value="1"/>
</dbReference>
<dbReference type="SUPFAM" id="SSF52218">
    <property type="entry name" value="Flavoproteins"/>
    <property type="match status" value="1"/>
</dbReference>
<comment type="function">
    <text evidence="1">Quinone reductase that provides resistance to thiol-specific stress caused by electrophilic quinones.</text>
</comment>
<comment type="function">
    <text evidence="1">Also exhibits azoreductase activity. Catalyzes the reductive cleavage of the azo bond in aromatic azo compounds to the corresponding amines.</text>
</comment>
<comment type="catalytic activity">
    <reaction evidence="1">
        <text>2 a quinone + NADH + H(+) = 2 a 1,4-benzosemiquinone + NAD(+)</text>
        <dbReference type="Rhea" id="RHEA:65952"/>
        <dbReference type="ChEBI" id="CHEBI:15378"/>
        <dbReference type="ChEBI" id="CHEBI:57540"/>
        <dbReference type="ChEBI" id="CHEBI:57945"/>
        <dbReference type="ChEBI" id="CHEBI:132124"/>
        <dbReference type="ChEBI" id="CHEBI:134225"/>
    </reaction>
</comment>
<comment type="catalytic activity">
    <reaction evidence="1">
        <text>N,N-dimethyl-1,4-phenylenediamine + anthranilate + 2 NAD(+) = 2-(4-dimethylaminophenyl)diazenylbenzoate + 2 NADH + 2 H(+)</text>
        <dbReference type="Rhea" id="RHEA:55872"/>
        <dbReference type="ChEBI" id="CHEBI:15378"/>
        <dbReference type="ChEBI" id="CHEBI:15783"/>
        <dbReference type="ChEBI" id="CHEBI:16567"/>
        <dbReference type="ChEBI" id="CHEBI:57540"/>
        <dbReference type="ChEBI" id="CHEBI:57945"/>
        <dbReference type="ChEBI" id="CHEBI:71579"/>
        <dbReference type="EC" id="1.7.1.17"/>
    </reaction>
</comment>
<comment type="cofactor">
    <cofactor evidence="1">
        <name>FMN</name>
        <dbReference type="ChEBI" id="CHEBI:58210"/>
    </cofactor>
    <text evidence="1">Binds 1 FMN per subunit.</text>
</comment>
<comment type="subunit">
    <text evidence="1">Homodimer.</text>
</comment>
<comment type="similarity">
    <text evidence="1">Belongs to the azoreductase type 1 family.</text>
</comment>
<gene>
    <name evidence="1" type="primary">azoR</name>
    <name type="ordered locus">Shewmr4_0321</name>
</gene>
<accession>Q0HNG6</accession>
<keyword id="KW-0285">Flavoprotein</keyword>
<keyword id="KW-0288">FMN</keyword>
<keyword id="KW-0520">NAD</keyword>
<keyword id="KW-0560">Oxidoreductase</keyword>
<evidence type="ECO:0000255" key="1">
    <source>
        <dbReference type="HAMAP-Rule" id="MF_01216"/>
    </source>
</evidence>
<reference key="1">
    <citation type="submission" date="2006-08" db="EMBL/GenBank/DDBJ databases">
        <title>Complete sequence of Shewanella sp. MR-4.</title>
        <authorList>
            <consortium name="US DOE Joint Genome Institute"/>
            <person name="Copeland A."/>
            <person name="Lucas S."/>
            <person name="Lapidus A."/>
            <person name="Barry K."/>
            <person name="Detter J.C."/>
            <person name="Glavina del Rio T."/>
            <person name="Hammon N."/>
            <person name="Israni S."/>
            <person name="Dalin E."/>
            <person name="Tice H."/>
            <person name="Pitluck S."/>
            <person name="Kiss H."/>
            <person name="Brettin T."/>
            <person name="Bruce D."/>
            <person name="Han C."/>
            <person name="Tapia R."/>
            <person name="Gilna P."/>
            <person name="Schmutz J."/>
            <person name="Larimer F."/>
            <person name="Land M."/>
            <person name="Hauser L."/>
            <person name="Kyrpides N."/>
            <person name="Mikhailova N."/>
            <person name="Nealson K."/>
            <person name="Konstantinidis K."/>
            <person name="Klappenbach J."/>
            <person name="Tiedje J."/>
            <person name="Richardson P."/>
        </authorList>
    </citation>
    <scope>NUCLEOTIDE SEQUENCE [LARGE SCALE GENOMIC DNA]</scope>
    <source>
        <strain>MR-4</strain>
    </source>
</reference>
<protein>
    <recommendedName>
        <fullName evidence="1">FMN-dependent NADH:quinone oxidoreductase</fullName>
        <ecNumber evidence="1">1.6.5.-</ecNumber>
    </recommendedName>
    <alternativeName>
        <fullName evidence="1">Azo-dye reductase</fullName>
    </alternativeName>
    <alternativeName>
        <fullName evidence="1">FMN-dependent NADH-azo compound oxidoreductase</fullName>
    </alternativeName>
    <alternativeName>
        <fullName evidence="1">FMN-dependent NADH-azoreductase</fullName>
        <ecNumber evidence="1">1.7.1.17</ecNumber>
    </alternativeName>
</protein>
<name>AZOR_SHESM</name>
<sequence>MSKVLVLKSSILGGYSQSALLVDHLIGKWEDQGATITVRDLAGKDVLPMVDGEIASGLRGGDDLTARQQEMLDLSNALVEELKANDTIVITAPMYNFNIPTQLKNWIDFVARAGVTFTYTENGPKGLVEGKRAVLITTRGGAHKDGPTDHIVPFLKTFLGFIGITDVEVVYGEALNMGPEANQKGISEAKQSLDALTV</sequence>